<gene>
    <name evidence="8" type="primary">prnA</name>
</gene>
<evidence type="ECO:0000269" key="1">
    <source>
    </source>
</evidence>
<evidence type="ECO:0000269" key="2">
    <source>
    </source>
</evidence>
<evidence type="ECO:0000269" key="3">
    <source>
    </source>
</evidence>
<evidence type="ECO:0000269" key="4">
    <source>
    </source>
</evidence>
<evidence type="ECO:0000269" key="5">
    <source>
    </source>
</evidence>
<evidence type="ECO:0000269" key="6">
    <source>
    </source>
</evidence>
<evidence type="ECO:0000303" key="7">
    <source>
    </source>
</evidence>
<evidence type="ECO:0000303" key="8">
    <source>
    </source>
</evidence>
<evidence type="ECO:0000305" key="9"/>
<evidence type="ECO:0000305" key="10">
    <source>
    </source>
</evidence>
<evidence type="ECO:0000305" key="11">
    <source>
    </source>
</evidence>
<evidence type="ECO:0000305" key="12">
    <source>
    </source>
</evidence>
<evidence type="ECO:0007744" key="13">
    <source>
        <dbReference type="PDB" id="2APG"/>
    </source>
</evidence>
<evidence type="ECO:0007744" key="14">
    <source>
        <dbReference type="PDB" id="2AQJ"/>
    </source>
</evidence>
<evidence type="ECO:0007744" key="15">
    <source>
        <dbReference type="PDB" id="2AR8"/>
    </source>
</evidence>
<evidence type="ECO:0007744" key="16">
    <source>
        <dbReference type="PDB" id="2ARD"/>
    </source>
</evidence>
<evidence type="ECO:0007744" key="17">
    <source>
        <dbReference type="PDB" id="2JKC"/>
    </source>
</evidence>
<evidence type="ECO:0007829" key="18">
    <source>
        <dbReference type="PDB" id="2APG"/>
    </source>
</evidence>
<evidence type="ECO:0007829" key="19">
    <source>
        <dbReference type="PDB" id="2AQJ"/>
    </source>
</evidence>
<evidence type="ECO:0007829" key="20">
    <source>
        <dbReference type="PDB" id="2ARD"/>
    </source>
</evidence>
<evidence type="ECO:0007829" key="21">
    <source>
        <dbReference type="PDB" id="2JKC"/>
    </source>
</evidence>
<evidence type="ECO:0007829" key="22">
    <source>
        <dbReference type="PDB" id="4Z44"/>
    </source>
</evidence>
<proteinExistence type="evidence at protein level"/>
<reference key="1">
    <citation type="journal article" date="1997" name="Appl. Environ. Microbiol.">
        <title>Four genes from Pseudomonas fluorescens that encode the biosynthesis of pyrrolnitrin.</title>
        <authorList>
            <person name="Hammer P.E."/>
            <person name="Hill D.S."/>
            <person name="Lam S.T."/>
            <person name="Van Pee K.H."/>
            <person name="Ligon J.M."/>
        </authorList>
    </citation>
    <scope>NUCLEOTIDE SEQUENCE [GENOMIC DNA]</scope>
    <scope>FUNCTION</scope>
    <scope>DISRUPTION PHENOTYPE</scope>
    <scope>NOMENCLATURE</scope>
    <source>
        <strain>Bl915</strain>
    </source>
</reference>
<reference key="2">
    <citation type="journal article" date="1998" name="J. Bacteriol.">
        <title>Functions encoded by pyrrolnitrin biosynthetic genes from Pseudomonas fluorescens.</title>
        <authorList>
            <person name="Kirner S."/>
            <person name="Hammer P.E."/>
            <person name="Hill D.S."/>
            <person name="Altmann A."/>
            <person name="Fischer I."/>
            <person name="Weislo L.J."/>
            <person name="Lanahan M."/>
            <person name="van Pee K.H."/>
            <person name="Ligon J.M."/>
        </authorList>
    </citation>
    <scope>NUCLEOTIDE SEQUENCE [GENOMIC DNA]</scope>
    <scope>FUNCTION</scope>
    <scope>CATALYTIC ACTIVITY</scope>
    <scope>DISRUPTION PHENOTYPE</scope>
    <source>
        <strain>Bl915</strain>
    </source>
</reference>
<reference key="3">
    <citation type="journal article" date="2000" name="Angew. Chem. Int. Ed.">
        <title>Purification and partial characterization of tryptophan 7-halogenase (PrnA) from Pseudomonas fluorescens.</title>
        <authorList>
            <person name="Keller S."/>
            <person name="Wage T."/>
            <person name="Hohaus K."/>
            <person name="Holzer M."/>
            <person name="Eichhorn E."/>
            <person name="van Pee K.H."/>
        </authorList>
    </citation>
    <scope>FUNCTION</scope>
</reference>
<reference key="4">
    <citation type="journal article" date="2004" name="Acta Crystallogr. D">
        <title>Crystallization and X-ray diffraction of a halogenating enzyme, tryptophan 7-halogenase, from Pseudomonas fluorescens.</title>
        <authorList>
            <person name="Dong C."/>
            <person name="Kotzsch A."/>
            <person name="Dorward M."/>
            <person name="van Pee K.H."/>
            <person name="Naismith J.H."/>
        </authorList>
    </citation>
    <scope>CRYSTALLIZATION</scope>
</reference>
<reference key="5">
    <citation type="journal article" date="2021" name="J. Biol. Chem.">
        <title>Dissecting the low catalytic capability of flavin-dependent halogenases.</title>
        <authorList>
            <person name="Phintha A."/>
            <person name="Prakinee K."/>
            <person name="Jaruwat A."/>
            <person name="Lawan N."/>
            <person name="Visitsatthawong S."/>
            <person name="Kantiwiriyawanitch C."/>
            <person name="Songsungthong W."/>
            <person name="Trisrivirat D."/>
            <person name="Chenprakhon P."/>
            <person name="Mulholland A."/>
            <person name="van Pee K.H."/>
            <person name="Chitnumsub P."/>
            <person name="Chaiyen P."/>
        </authorList>
    </citation>
    <scope>FUNCTION</scope>
    <scope>CATALYTIC ACTIVITY</scope>
</reference>
<reference evidence="13 14 15 16" key="6">
    <citation type="journal article" date="2005" name="Science">
        <title>Tryptophan 7-halogenase (PrnA) structure suggests a mechanism for regioselective chlorination.</title>
        <authorList>
            <person name="Dong C."/>
            <person name="Flecks S."/>
            <person name="Unversucht S."/>
            <person name="Haupt C."/>
            <person name="van Pee K.H."/>
            <person name="Naismith J.H."/>
        </authorList>
    </citation>
    <scope>X-RAY CRYSTALLOGRAPHY (1.80 ANGSTROMS) IN COMPLEXES WITH FAD; CHLORIDE; TRYPTOPHAN AND 7-CHLOROTRYPTOPHAN</scope>
    <scope>ACTIVE SITE</scope>
    <scope>PROPOSED REACTION MECHANISM</scope>
    <scope>MUTAGENESIS OF LYS-79 AND GLU-346</scope>
    <scope>SUBUNIT</scope>
</reference>
<reference evidence="17" key="7">
    <citation type="journal article" date="2008" name="Angew. Chem. Int. Ed.">
        <title>New insights into the mechanism of enzymatic chlorination of tryptophan.</title>
        <authorList>
            <person name="Flecks S."/>
            <person name="Patallo E.P."/>
            <person name="Zhu X."/>
            <person name="Ernyei A.J."/>
            <person name="Seifert G."/>
            <person name="Schneider A."/>
            <person name="Dong C."/>
            <person name="Naismith J.H."/>
            <person name="van Pee K.H."/>
        </authorList>
    </citation>
    <scope>X-RAY CRYSTALLOGRAPHY (2.30 ANGSTROMS) OF MUTANT ASP-346 IN COMPLEX WITH FAD AND TRYPTOPHAN</scope>
    <scope>BIOPHYSICOCHEMICAL PROPERTIES</scope>
    <scope>PROPOSED REACTION MECHANISM</scope>
    <scope>MUTAGENESIS OF TRP-272; TRP-274; GLU-346 AND SER-347</scope>
</reference>
<name>TRP7H_PSEFL</name>
<dbReference type="EC" id="1.14.19.9" evidence="4 6"/>
<dbReference type="EMBL" id="U74493">
    <property type="protein sequence ID" value="AAB97504.1"/>
    <property type="molecule type" value="Genomic_DNA"/>
</dbReference>
<dbReference type="PDB" id="2APG">
    <property type="method" value="X-ray"/>
    <property type="resolution" value="1.90 A"/>
    <property type="chains" value="A=1-538"/>
</dbReference>
<dbReference type="PDB" id="2AQJ">
    <property type="method" value="X-ray"/>
    <property type="resolution" value="1.80 A"/>
    <property type="chains" value="A=1-538"/>
</dbReference>
<dbReference type="PDB" id="2AR8">
    <property type="method" value="X-ray"/>
    <property type="resolution" value="2.20 A"/>
    <property type="chains" value="A=1-538"/>
</dbReference>
<dbReference type="PDB" id="2ARD">
    <property type="method" value="X-ray"/>
    <property type="resolution" value="2.60 A"/>
    <property type="chains" value="A=1-538"/>
</dbReference>
<dbReference type="PDB" id="2JKC">
    <property type="method" value="X-ray"/>
    <property type="resolution" value="2.30 A"/>
    <property type="chains" value="A=1-538"/>
</dbReference>
<dbReference type="PDB" id="4Z43">
    <property type="method" value="X-ray"/>
    <property type="resolution" value="2.29 A"/>
    <property type="chains" value="A=1-538"/>
</dbReference>
<dbReference type="PDB" id="4Z44">
    <property type="method" value="X-ray"/>
    <property type="resolution" value="2.20 A"/>
    <property type="chains" value="A=1-538"/>
</dbReference>
<dbReference type="PDBsum" id="2APG"/>
<dbReference type="PDBsum" id="2AQJ"/>
<dbReference type="PDBsum" id="2AR8"/>
<dbReference type="PDBsum" id="2ARD"/>
<dbReference type="PDBsum" id="2JKC"/>
<dbReference type="PDBsum" id="4Z43"/>
<dbReference type="PDBsum" id="4Z44"/>
<dbReference type="SMR" id="P95480"/>
<dbReference type="KEGG" id="ag:AAB97504"/>
<dbReference type="BioCyc" id="MetaCyc:MONOMER-16710"/>
<dbReference type="BRENDA" id="1.14.19.9">
    <property type="organism ID" value="5121"/>
</dbReference>
<dbReference type="SABIO-RK" id="P95480"/>
<dbReference type="EvolutionaryTrace" id="P95480"/>
<dbReference type="GO" id="GO:0004497">
    <property type="term" value="F:monooxygenase activity"/>
    <property type="evidence" value="ECO:0007669"/>
    <property type="project" value="InterPro"/>
</dbReference>
<dbReference type="GO" id="GO:0000166">
    <property type="term" value="F:nucleotide binding"/>
    <property type="evidence" value="ECO:0007669"/>
    <property type="project" value="UniProtKB-KW"/>
</dbReference>
<dbReference type="GO" id="GO:0017000">
    <property type="term" value="P:antibiotic biosynthetic process"/>
    <property type="evidence" value="ECO:0007669"/>
    <property type="project" value="UniProtKB-KW"/>
</dbReference>
<dbReference type="Gene3D" id="3.50.50.60">
    <property type="entry name" value="FAD/NAD(P)-binding domain"/>
    <property type="match status" value="1"/>
</dbReference>
<dbReference type="InterPro" id="IPR036188">
    <property type="entry name" value="FAD/NAD-bd_sf"/>
</dbReference>
<dbReference type="InterPro" id="IPR050816">
    <property type="entry name" value="Flavin-dep_Halogenase_NPB"/>
</dbReference>
<dbReference type="InterPro" id="IPR006905">
    <property type="entry name" value="Flavin_halogenase"/>
</dbReference>
<dbReference type="InterPro" id="IPR033856">
    <property type="entry name" value="Trp_halogen"/>
</dbReference>
<dbReference type="PANTHER" id="PTHR43747">
    <property type="entry name" value="FAD-BINDING PROTEIN"/>
    <property type="match status" value="1"/>
</dbReference>
<dbReference type="PANTHER" id="PTHR43747:SF4">
    <property type="entry name" value="FLAVIN-DEPENDENT TRYPTOPHAN HALOGENASE"/>
    <property type="match status" value="1"/>
</dbReference>
<dbReference type="Pfam" id="PF04820">
    <property type="entry name" value="Trp_halogenase"/>
    <property type="match status" value="1"/>
</dbReference>
<dbReference type="PIRSF" id="PIRSF011396">
    <property type="entry name" value="Trp_halogenase"/>
    <property type="match status" value="1"/>
</dbReference>
<dbReference type="SUPFAM" id="SSF51905">
    <property type="entry name" value="FAD/NAD(P)-binding domain"/>
    <property type="match status" value="1"/>
</dbReference>
<feature type="chain" id="PRO_0000422330" description="Tryptophan 7-halogenase PrnA">
    <location>
        <begin position="1"/>
        <end position="538"/>
    </location>
</feature>
<feature type="active site" evidence="2">
    <location>
        <position position="79"/>
    </location>
</feature>
<feature type="binding site" evidence="2 3 13 14 15 17">
    <location>
        <position position="13"/>
    </location>
    <ligand>
        <name>FAD</name>
        <dbReference type="ChEBI" id="CHEBI:57692"/>
    </ligand>
</feature>
<feature type="binding site" evidence="2 13 15">
    <location>
        <position position="15"/>
    </location>
    <ligand>
        <name>FAD</name>
        <dbReference type="ChEBI" id="CHEBI:57692"/>
    </ligand>
</feature>
<feature type="binding site" evidence="2 13 14 15">
    <location>
        <position position="16"/>
    </location>
    <ligand>
        <name>FAD</name>
        <dbReference type="ChEBI" id="CHEBI:57692"/>
    </ligand>
</feature>
<feature type="binding site" evidence="2 3 13 14 15 17">
    <location>
        <position position="39"/>
    </location>
    <ligand>
        <name>FAD</name>
        <dbReference type="ChEBI" id="CHEBI:57692"/>
    </ligand>
</feature>
<feature type="binding site" evidence="2 3 13 14 15 17">
    <location>
        <position position="42"/>
    </location>
    <ligand>
        <name>FAD</name>
        <dbReference type="ChEBI" id="CHEBI:57692"/>
    </ligand>
</feature>
<feature type="binding site" evidence="2 3 13 14 15 17">
    <location>
        <position position="45"/>
    </location>
    <ligand>
        <name>FAD</name>
        <dbReference type="ChEBI" id="CHEBI:57692"/>
    </ligand>
</feature>
<feature type="binding site" evidence="2 13 14 15">
    <location>
        <position position="49"/>
    </location>
    <ligand>
        <name>FAD</name>
        <dbReference type="ChEBI" id="CHEBI:57692"/>
    </ligand>
</feature>
<feature type="binding site" evidence="2 3 13 14 15 17">
    <location>
        <position position="50"/>
    </location>
    <ligand>
        <name>FAD</name>
        <dbReference type="ChEBI" id="CHEBI:57692"/>
    </ligand>
</feature>
<feature type="binding site" evidence="2 15">
    <location>
        <position position="79"/>
    </location>
    <ligand>
        <name>7-chloro-L-tryptophan</name>
        <dbReference type="ChEBI" id="CHEBI:58713"/>
    </ligand>
</feature>
<feature type="binding site" evidence="2 3 13 14 15 17">
    <location>
        <position position="187"/>
    </location>
    <ligand>
        <name>FAD</name>
        <dbReference type="ChEBI" id="CHEBI:57692"/>
    </ligand>
</feature>
<feature type="binding site" evidence="2 3 13 14 15 17">
    <location>
        <position position="337"/>
    </location>
    <ligand>
        <name>FAD</name>
        <dbReference type="ChEBI" id="CHEBI:57692"/>
    </ligand>
</feature>
<feature type="binding site" evidence="2 15">
    <location>
        <position position="346"/>
    </location>
    <ligand>
        <name>7-chloro-L-tryptophan</name>
        <dbReference type="ChEBI" id="CHEBI:58713"/>
    </ligand>
</feature>
<feature type="binding site" evidence="2 14">
    <location>
        <position position="346"/>
    </location>
    <ligand>
        <name>L-tryptophan</name>
        <dbReference type="ChEBI" id="CHEBI:57912"/>
    </ligand>
</feature>
<feature type="binding site" evidence="2 13 14 15">
    <location>
        <position position="348"/>
    </location>
    <ligand>
        <name>chloride</name>
        <dbReference type="ChEBI" id="CHEBI:17996"/>
    </ligand>
</feature>
<feature type="binding site" evidence="2 13 14 15">
    <location>
        <position position="349"/>
    </location>
    <ligand>
        <name>chloride</name>
        <dbReference type="ChEBI" id="CHEBI:17996"/>
    </ligand>
</feature>
<feature type="binding site" evidence="2 3 13 14 15 17">
    <location>
        <position position="350"/>
    </location>
    <ligand>
        <name>FAD</name>
        <dbReference type="ChEBI" id="CHEBI:57692"/>
    </ligand>
</feature>
<feature type="binding site" evidence="2 15">
    <location>
        <position position="443"/>
    </location>
    <ligand>
        <name>7-chloro-L-tryptophan</name>
        <dbReference type="ChEBI" id="CHEBI:58713"/>
    </ligand>
</feature>
<feature type="binding site" evidence="2 3 14 17">
    <location>
        <position position="443"/>
    </location>
    <ligand>
        <name>L-tryptophan</name>
        <dbReference type="ChEBI" id="CHEBI:57912"/>
    </ligand>
</feature>
<feature type="binding site" evidence="2 15">
    <location>
        <position position="444"/>
    </location>
    <ligand>
        <name>7-chloro-L-tryptophan</name>
        <dbReference type="ChEBI" id="CHEBI:58713"/>
    </ligand>
</feature>
<feature type="binding site" evidence="2 3 14 17">
    <location>
        <position position="444"/>
    </location>
    <ligand>
        <name>L-tryptophan</name>
        <dbReference type="ChEBI" id="CHEBI:57912"/>
    </ligand>
</feature>
<feature type="binding site" evidence="2 15">
    <location>
        <position position="450"/>
    </location>
    <ligand>
        <name>7-chloro-L-tryptophan</name>
        <dbReference type="ChEBI" id="CHEBI:58713"/>
    </ligand>
</feature>
<feature type="binding site" evidence="2 14">
    <location>
        <position position="450"/>
    </location>
    <ligand>
        <name>L-tryptophan</name>
        <dbReference type="ChEBI" id="CHEBI:57912"/>
    </ligand>
</feature>
<feature type="binding site" evidence="2 15">
    <location>
        <position position="454"/>
    </location>
    <ligand>
        <name>7-chloro-L-tryptophan</name>
        <dbReference type="ChEBI" id="CHEBI:58713"/>
    </ligand>
</feature>
<feature type="binding site" evidence="2 3 14 17">
    <location>
        <position position="454"/>
    </location>
    <ligand>
        <name>L-tryptophan</name>
        <dbReference type="ChEBI" id="CHEBI:57912"/>
    </ligand>
</feature>
<feature type="site" description="Role in guiding and activating HOCl">
    <location>
        <position position="79"/>
    </location>
</feature>
<feature type="site" description="Important for activity" evidence="10 11">
    <location>
        <position position="346"/>
    </location>
</feature>
<feature type="mutagenesis site" description="Loss of halogenase activity." evidence="2">
    <original>K</original>
    <variation>A</variation>
    <location>
        <position position="79"/>
    </location>
</feature>
<feature type="mutagenesis site" description="No change in halogenase activity." evidence="3">
    <original>W</original>
    <variation>A</variation>
    <location>
        <position position="272"/>
    </location>
</feature>
<feature type="mutagenesis site" description="No change in halogenase activity." evidence="3">
    <original>W</original>
    <variation>F</variation>
    <location>
        <position position="272"/>
    </location>
</feature>
<feature type="mutagenesis site" description="No change in halogenase activity." evidence="3">
    <original>W</original>
    <variation>A</variation>
    <location>
        <position position="274"/>
    </location>
</feature>
<feature type="mutagenesis site" description="No change in halogenase activity." evidence="3">
    <original>W</original>
    <variation>F</variation>
    <location>
        <position position="274"/>
    </location>
</feature>
<feature type="mutagenesis site" description="Loss of halogenase activity." evidence="2 3">
    <original>E</original>
    <variation>D</variation>
    <location>
        <position position="346"/>
    </location>
</feature>
<feature type="mutagenesis site" description="The catalytic efficiency decreases by about two orders of magnitude, however the binding affinity is unchanged." evidence="2 3">
    <original>E</original>
    <variation>Q</variation>
    <location>
        <position position="346"/>
    </location>
</feature>
<feature type="mutagenesis site" description="Does not completely abolish halogenase activity." evidence="3">
    <original>S</original>
    <variation>A</variation>
    <location>
        <position position="347"/>
    </location>
</feature>
<feature type="strand" evidence="19">
    <location>
        <begin position="7"/>
        <end position="11"/>
    </location>
</feature>
<feature type="helix" evidence="19">
    <location>
        <begin position="15"/>
        <end position="27"/>
    </location>
</feature>
<feature type="turn" evidence="21">
    <location>
        <begin position="28"/>
        <end position="30"/>
    </location>
</feature>
<feature type="strand" evidence="19">
    <location>
        <begin position="33"/>
        <end position="38"/>
    </location>
</feature>
<feature type="strand" evidence="19">
    <location>
        <begin position="40"/>
        <end position="42"/>
    </location>
</feature>
<feature type="helix" evidence="19">
    <location>
        <begin position="54"/>
        <end position="58"/>
    </location>
</feature>
<feature type="helix" evidence="19">
    <location>
        <begin position="60"/>
        <end position="63"/>
    </location>
</feature>
<feature type="helix" evidence="19">
    <location>
        <begin position="67"/>
        <end position="70"/>
    </location>
</feature>
<feature type="helix" evidence="19">
    <location>
        <begin position="71"/>
        <end position="74"/>
    </location>
</feature>
<feature type="strand" evidence="19">
    <location>
        <begin position="77"/>
        <end position="79"/>
    </location>
</feature>
<feature type="strand" evidence="19">
    <location>
        <begin position="81"/>
        <end position="86"/>
    </location>
</feature>
<feature type="strand" evidence="19">
    <location>
        <begin position="88"/>
        <end position="90"/>
    </location>
</feature>
<feature type="strand" evidence="19">
    <location>
        <begin position="98"/>
        <end position="104"/>
    </location>
</feature>
<feature type="strand" evidence="22">
    <location>
        <begin position="108"/>
        <end position="113"/>
    </location>
</feature>
<feature type="helix" evidence="19">
    <location>
        <begin position="114"/>
        <end position="123"/>
    </location>
</feature>
<feature type="helix" evidence="19">
    <location>
        <begin position="130"/>
        <end position="134"/>
    </location>
</feature>
<feature type="helix" evidence="19">
    <location>
        <begin position="138"/>
        <end position="142"/>
    </location>
</feature>
<feature type="strand" evidence="19">
    <location>
        <begin position="159"/>
        <end position="162"/>
    </location>
</feature>
<feature type="helix" evidence="19">
    <location>
        <begin position="164"/>
        <end position="177"/>
    </location>
</feature>
<feature type="strand" evidence="19">
    <location>
        <begin position="181"/>
        <end position="184"/>
    </location>
</feature>
<feature type="strand" evidence="19">
    <location>
        <begin position="187"/>
        <end position="192"/>
    </location>
</feature>
<feature type="strand" evidence="20">
    <location>
        <begin position="194"/>
        <end position="196"/>
    </location>
</feature>
<feature type="strand" evidence="19">
    <location>
        <begin position="198"/>
        <end position="203"/>
    </location>
</feature>
<feature type="strand" evidence="22">
    <location>
        <begin position="208"/>
        <end position="210"/>
    </location>
</feature>
<feature type="strand" evidence="19">
    <location>
        <begin position="212"/>
        <end position="216"/>
    </location>
</feature>
<feature type="helix" evidence="19">
    <location>
        <begin position="219"/>
        <end position="221"/>
    </location>
</feature>
<feature type="helix" evidence="19">
    <location>
        <begin position="223"/>
        <end position="228"/>
    </location>
</feature>
<feature type="strand" evidence="19">
    <location>
        <begin position="233"/>
        <end position="235"/>
    </location>
</feature>
<feature type="turn" evidence="19">
    <location>
        <begin position="237"/>
        <end position="239"/>
    </location>
</feature>
<feature type="strand" evidence="19">
    <location>
        <begin position="244"/>
        <end position="251"/>
    </location>
</feature>
<feature type="helix" evidence="19">
    <location>
        <begin position="254"/>
        <end position="257"/>
    </location>
</feature>
<feature type="strand" evidence="19">
    <location>
        <begin position="261"/>
        <end position="267"/>
    </location>
</feature>
<feature type="strand" evidence="19">
    <location>
        <begin position="269"/>
        <end position="278"/>
    </location>
</feature>
<feature type="strand" evidence="19">
    <location>
        <begin position="281"/>
        <end position="288"/>
    </location>
</feature>
<feature type="turn" evidence="19">
    <location>
        <begin position="290"/>
        <end position="292"/>
    </location>
</feature>
<feature type="helix" evidence="19">
    <location>
        <begin position="295"/>
        <end position="306"/>
    </location>
</feature>
<feature type="strand" evidence="19">
    <location>
        <begin position="315"/>
        <end position="318"/>
    </location>
</feature>
<feature type="strand" evidence="19">
    <location>
        <begin position="322"/>
        <end position="325"/>
    </location>
</feature>
<feature type="strand" evidence="19">
    <location>
        <begin position="327"/>
        <end position="329"/>
    </location>
</feature>
<feature type="strand" evidence="19">
    <location>
        <begin position="332"/>
        <end position="334"/>
    </location>
</feature>
<feature type="helix" evidence="19">
    <location>
        <begin position="336"/>
        <end position="338"/>
    </location>
</feature>
<feature type="helix" evidence="18">
    <location>
        <begin position="344"/>
        <end position="346"/>
    </location>
</feature>
<feature type="helix" evidence="19">
    <location>
        <begin position="349"/>
        <end position="362"/>
    </location>
</feature>
<feature type="helix" evidence="19">
    <location>
        <begin position="371"/>
        <end position="397"/>
    </location>
</feature>
<feature type="helix" evidence="19">
    <location>
        <begin position="405"/>
        <end position="412"/>
    </location>
</feature>
<feature type="helix" evidence="19">
    <location>
        <begin position="418"/>
        <end position="429"/>
    </location>
</feature>
<feature type="helix" evidence="19">
    <location>
        <begin position="440"/>
        <end position="445"/>
    </location>
</feature>
<feature type="helix" evidence="19">
    <location>
        <begin position="447"/>
        <end position="452"/>
    </location>
</feature>
<feature type="helix" evidence="19">
    <location>
        <begin position="457"/>
        <end position="467"/>
    </location>
</feature>
<feature type="helix" evidence="19">
    <location>
        <begin position="476"/>
        <end position="480"/>
    </location>
</feature>
<feature type="helix" evidence="19">
    <location>
        <begin position="482"/>
        <end position="505"/>
    </location>
</feature>
<feature type="helix" evidence="19">
    <location>
        <begin position="509"/>
        <end position="516"/>
    </location>
</feature>
<comment type="function">
    <text evidence="1 4 5 6">Involved in the biosynthesis of the antifungal antibiotic pyrrolnitrin (PubMed:9172332, PubMed:9537395). Catalyzes the chlorination of tryptophan (Trp) at C7 position to yield 7-chloro-L-tryptophan (7-CLT) (PubMed:10941070, PubMed:33465708, PubMed:9537395).</text>
</comment>
<comment type="catalytic activity">
    <reaction evidence="4 6">
        <text>L-tryptophan + FADH2 + chloride + O2 = 7-chloro-L-tryptophan + FAD + 2 H2O</text>
        <dbReference type="Rhea" id="RHEA:26494"/>
        <dbReference type="ChEBI" id="CHEBI:15377"/>
        <dbReference type="ChEBI" id="CHEBI:15379"/>
        <dbReference type="ChEBI" id="CHEBI:17996"/>
        <dbReference type="ChEBI" id="CHEBI:57692"/>
        <dbReference type="ChEBI" id="CHEBI:57912"/>
        <dbReference type="ChEBI" id="CHEBI:58307"/>
        <dbReference type="ChEBI" id="CHEBI:58713"/>
        <dbReference type="EC" id="1.14.19.9"/>
    </reaction>
    <physiologicalReaction direction="left-to-right" evidence="6">
        <dbReference type="Rhea" id="RHEA:26495"/>
    </physiologicalReaction>
</comment>
<comment type="biophysicochemical properties">
    <kinetics>
        <KM evidence="3">17.1 uM for tryptophan (with FAD at pH 7.2 and 30 degrees Celsius)</KM>
        <Vmax evidence="3">43.0 pmol/min/mg enzyme</Vmax>
    </kinetics>
</comment>
<comment type="pathway">
    <text evidence="12">Antibiotic biosynthesis.</text>
</comment>
<comment type="subunit">
    <text evidence="2 3">Homodimer.</text>
</comment>
<comment type="disruption phenotype">
    <text evidence="5 6">Cells lacking this gene lose the ability to produce pyrrolnitrin.</text>
</comment>
<comment type="miscellaneous">
    <text evidence="2 3">The reaction between FADH(2), Cl(-) and O(2) produces hypochlorous acid (HOCl), a powerful oxidant (PubMed:16195462). Unlike the mechanism proposed for the tryptophan 7-halogenase RebH (AC Q8KHZ8), which suggests the formation of a chloramine intermediate with a conserved lysine, HOCl is proposed to be a direct halogenation reagent, with the conserved lysine that may hydrogen bond to HOCl to enhance the electrophilicity of the chlorine species and for its correct positioning for incorporation into the 7-position (PubMed:16195462, PubMed:18979475).</text>
</comment>
<comment type="similarity">
    <text evidence="9">Belongs to the flavin-dependent halogenase family. Bacterial tryptophan halogenase subfamily.</text>
</comment>
<keyword id="KW-0002">3D-structure</keyword>
<keyword id="KW-0045">Antibiotic biosynthesis</keyword>
<keyword id="KW-0274">FAD</keyword>
<keyword id="KW-0285">Flavoprotein</keyword>
<keyword id="KW-0547">Nucleotide-binding</keyword>
<keyword id="KW-0560">Oxidoreductase</keyword>
<protein>
    <recommendedName>
        <fullName evidence="7">Tryptophan 7-halogenase PrnA</fullName>
        <ecNumber evidence="4 6">1.14.19.9</ecNumber>
    </recommendedName>
    <alternativeName>
        <fullName>Flavin-dependent tryptophan halogenase PrnA</fullName>
    </alternativeName>
</protein>
<organism>
    <name type="scientific">Pseudomonas fluorescens</name>
    <dbReference type="NCBI Taxonomy" id="294"/>
    <lineage>
        <taxon>Bacteria</taxon>
        <taxon>Pseudomonadati</taxon>
        <taxon>Pseudomonadota</taxon>
        <taxon>Gammaproteobacteria</taxon>
        <taxon>Pseudomonadales</taxon>
        <taxon>Pseudomonadaceae</taxon>
        <taxon>Pseudomonas</taxon>
    </lineage>
</organism>
<accession>P95480</accession>
<sequence>MNKPIKNIVIVGGGTAGWMAASYLVRALQQQANITLIESAAIPRIGVGEATIPSLQKVFFDFLGIPEREWMPQVNGAFKAAIKFVNWRKSPDPSRDDHFYHLFGNVPNCDGVPLTHYWLRKREQGFQQPMEYACYPQPGALDGKLAPCLSDGTRQMSHAWHFDAHLVADFLKRWAVERGVNRVVDEVVDVRLNNRGYISNLLTKEGRTLEADLFIDCSGMRGLLINQALKEPFIDMSDYLLCDSAVASAVPNDDARDGVEPYTSSIAMNSGWTWKIPMLGRFGSGYVFSSHFTSRDQATADFLKLWGLSDNQPLNQIKFRVGRNKRAWVNNCVSIGLSSCFLEPLESTGIYFIYAALYQLVKHFPDTSFDPRLSDAFNAEIVHMFDDCRDFVQAHYFTTSRDDTPFWLANRHDLRLSDAIKEKVQRYKAGLPLTTTSFDDSTYYETFDYEFKNFWLNGNYYCIFAGLGMLPDRSLPLLQHRPESIEKAEAMFASIRREAERLRTSLPTNYDYLRSLRDGDAGLSRGQRGPKLAAQESL</sequence>